<comment type="function">
    <text evidence="1 2 8">Tryptase is the major neutral protease present in mast cells and is secreted upon the coupled activation-degranulation response of this cell type. May play a role in innate immunity. Isoform 2 cleaves large substrates, such as fibronectin, more efficiently than isoform 1, but seems less efficient toward small substrates (PubMed:18854315).</text>
</comment>
<comment type="catalytic activity">
    <reaction>
        <text>Preferential cleavage: Arg-|-Xaa, Lys-|-Xaa, but with more restricted specificity than trypsin.</text>
        <dbReference type="EC" id="3.4.21.59"/>
    </reaction>
</comment>
<comment type="subunit">
    <text evidence="7">Homotetramer. The active tetramer is converted to inactive monomers at neutral and acidic pH in the absence of heparin. Low concentrations of inactive monomers become active monomers at pH 6.0 in the presence of heparin. When the concentration of active monomers is higher, they convert to active monomers and then to active tetramers. These monomers are active and functionally distinct from the tetrameric enzyme. In contrast to the hidden active sites in the tetrameric form, the active site of the monomeric form is accessible for macromolecular proteins and inhibitors, e.g. fibrinogen which is a substrate for the monomeric but not for the tetrameric form. The monomeric form forms a complex with SERPINB6.</text>
</comment>
<comment type="interaction">
    <interactant intactId="EBI-1761369">
        <id>Q15661</id>
    </interactant>
    <interactant intactId="EBI-389883">
        <id>P16333</id>
        <label>NCK1</label>
    </interactant>
    <organismsDiffer>false</organismsDiffer>
    <experiments>2</experiments>
</comment>
<comment type="interaction">
    <interactant intactId="EBI-1761369">
        <id>Q15661</id>
    </interactant>
    <interactant intactId="EBI-79464">
        <id>P27986</id>
        <label>PIK3R1</label>
    </interactant>
    <organismsDiffer>false</organismsDiffer>
    <experiments>2</experiments>
</comment>
<comment type="interaction">
    <interactant intactId="EBI-1761369">
        <id>Q15661</id>
    </interactant>
    <interactant intactId="EBI-1761369">
        <id>Q15661</id>
        <label>TPSAB1</label>
    </interactant>
    <organismsDiffer>false</organismsDiffer>
    <experiments>3</experiments>
</comment>
<comment type="subcellular location">
    <subcellularLocation>
        <location>Secreted</location>
    </subcellularLocation>
    <text evidence="1">Released from the secretory granules upon mast cell activation.</text>
</comment>
<comment type="alternative products">
    <event type="alternative splicing"/>
    <isoform>
        <id>Q15661-1</id>
        <name>1</name>
        <sequence type="displayed"/>
    </isoform>
    <isoform>
        <id>Q15661-2</id>
        <name>2</name>
        <sequence type="described" ref="VSP_005375"/>
    </isoform>
</comment>
<comment type="tissue specificity">
    <text evidence="8">Isoform 1 and isoform 2 are expressed in lung, stomach, spleen, heart and skin; in these tissues, isoform 1 is predominant. Isoform 2 is expressed in aorta, spleen, and breast tumor, with highest levels in the endothelial cells of some blood vessels surrounding the aorta, as well as those surrounding the tumor and low levels, if any, in mast cells (at protein level).</text>
</comment>
<comment type="polymorphism">
    <text evidence="8 11 14">There are two alleles alpha and beta-I. The sequence shown is that of allele beta-I.</text>
</comment>
<comment type="disease">
    <text evidence="13">Hereditary alpha tryptasemia is caused by an increase in the copy number (usually between two and three copies) of the alpha allele. Affected individuals have elevated basal serum tryptase levels that are associated with cutaneous flushing and pruritus, dysautonomia, functional gastrointestinal symptoms, chronic pain, and connective tissue abnormalities. It is not clear if the associated multisystem complaints might be due to the coinheritance of a second functional genetic variant.</text>
</comment>
<comment type="similarity">
    <text evidence="4">Belongs to the peptidase S1 family. Tryptase subfamily.</text>
</comment>
<name>TRYB1_HUMAN</name>
<keyword id="KW-0002">3D-structure</keyword>
<keyword id="KW-0025">Alternative splicing</keyword>
<keyword id="KW-0903">Direct protein sequencing</keyword>
<keyword id="KW-1015">Disulfide bond</keyword>
<keyword id="KW-0325">Glycoprotein</keyword>
<keyword id="KW-0378">Hydrolase</keyword>
<keyword id="KW-0645">Protease</keyword>
<keyword id="KW-1267">Proteomics identification</keyword>
<keyword id="KW-1185">Reference proteome</keyword>
<keyword id="KW-0964">Secreted</keyword>
<keyword id="KW-0720">Serine protease</keyword>
<keyword id="KW-0732">Signal</keyword>
<keyword id="KW-0865">Zymogen</keyword>
<organism>
    <name type="scientific">Homo sapiens</name>
    <name type="common">Human</name>
    <dbReference type="NCBI Taxonomy" id="9606"/>
    <lineage>
        <taxon>Eukaryota</taxon>
        <taxon>Metazoa</taxon>
        <taxon>Chordata</taxon>
        <taxon>Craniata</taxon>
        <taxon>Vertebrata</taxon>
        <taxon>Euteleostomi</taxon>
        <taxon>Mammalia</taxon>
        <taxon>Eutheria</taxon>
        <taxon>Euarchontoglires</taxon>
        <taxon>Primates</taxon>
        <taxon>Haplorrhini</taxon>
        <taxon>Catarrhini</taxon>
        <taxon>Hominidae</taxon>
        <taxon>Homo</taxon>
    </lineage>
</organism>
<sequence>MLNLLLLALPVLASRAYAAPAPGQALQRVGIVGGQEAPRSKWPWQVSLRVHGPYWMHFCGGSLIHPQWVLTAAHCVGPDVKDLAALRVQLREQHLYYQDQLLPVSRIIVHPQFYTAQIGADIALLELEEPVNVSSHVHTVTLPPASETFPPGMPCWVTGWGDVDNDERLPPPFPLKQVKVPIMENHICDAKYHLGAYTGDDVRIVRDDMLCAGNTRRDSCQGDSGGPLVCKVNGTWLQAGVVSWGEGCAQPNRPGIYTRVTYYLDWIHHYVPKKP</sequence>
<evidence type="ECO:0000250" key="1"/>
<evidence type="ECO:0000250" key="2">
    <source>
        <dbReference type="UniProtKB" id="P21845"/>
    </source>
</evidence>
<evidence type="ECO:0000255" key="3"/>
<evidence type="ECO:0000255" key="4">
    <source>
        <dbReference type="PROSITE-ProRule" id="PRU00274"/>
    </source>
</evidence>
<evidence type="ECO:0000269" key="5">
    <source>
    </source>
</evidence>
<evidence type="ECO:0000269" key="6">
    <source>
    </source>
</evidence>
<evidence type="ECO:0000269" key="7">
    <source>
    </source>
</evidence>
<evidence type="ECO:0000269" key="8">
    <source>
    </source>
</evidence>
<evidence type="ECO:0000269" key="9">
    <source>
    </source>
</evidence>
<evidence type="ECO:0000269" key="10">
    <source>
    </source>
</evidence>
<evidence type="ECO:0000269" key="11">
    <source>
    </source>
</evidence>
<evidence type="ECO:0000269" key="12">
    <source>
    </source>
</evidence>
<evidence type="ECO:0000269" key="13">
    <source>
    </source>
</evidence>
<evidence type="ECO:0000269" key="14">
    <source>
    </source>
</evidence>
<evidence type="ECO:0000305" key="15"/>
<evidence type="ECO:0007829" key="16">
    <source>
        <dbReference type="PDB" id="2F9N"/>
    </source>
</evidence>
<evidence type="ECO:0007829" key="17">
    <source>
        <dbReference type="PDB" id="2F9O"/>
    </source>
</evidence>
<evidence type="ECO:0007829" key="18">
    <source>
        <dbReference type="PDB" id="2F9P"/>
    </source>
</evidence>
<evidence type="ECO:0007829" key="19">
    <source>
        <dbReference type="PDB" id="4MPU"/>
    </source>
</evidence>
<evidence type="ECO:0007829" key="20">
    <source>
        <dbReference type="PDB" id="5F03"/>
    </source>
</evidence>
<evidence type="ECO:0007829" key="21">
    <source>
        <dbReference type="PDB" id="8VGH"/>
    </source>
</evidence>
<evidence type="ECO:0007829" key="22">
    <source>
        <dbReference type="PDB" id="8VGK"/>
    </source>
</evidence>
<dbReference type="EC" id="3.4.21.59"/>
<dbReference type="EMBL" id="M30038">
    <property type="protein sequence ID" value="AAA86934.1"/>
    <property type="molecule type" value="mRNA"/>
</dbReference>
<dbReference type="EMBL" id="M33494">
    <property type="protein sequence ID" value="AAC83172.1"/>
    <property type="molecule type" value="Genomic_DNA"/>
</dbReference>
<dbReference type="EMBL" id="M33491">
    <property type="protein sequence ID" value="AAA36778.1"/>
    <property type="molecule type" value="mRNA"/>
</dbReference>
<dbReference type="EMBL" id="AF098328">
    <property type="protein sequence ID" value="AAD17846.1"/>
    <property type="molecule type" value="Genomic_DNA"/>
</dbReference>
<dbReference type="EMBL" id="AF099144">
    <property type="protein sequence ID" value="AAD17860.1"/>
    <property type="molecule type" value="Genomic_DNA"/>
</dbReference>
<dbReference type="EMBL" id="AF206665">
    <property type="protein sequence ID" value="AAG35695.1"/>
    <property type="molecule type" value="mRNA"/>
</dbReference>
<dbReference type="EMBL" id="AF206666">
    <property type="protein sequence ID" value="AAG35696.1"/>
    <property type="molecule type" value="mRNA"/>
</dbReference>
<dbReference type="EMBL" id="AF206667">
    <property type="protein sequence ID" value="AAG35697.1"/>
    <property type="molecule type" value="mRNA"/>
</dbReference>
<dbReference type="EMBL" id="FJ931116">
    <property type="protein sequence ID" value="ACZ98910.1"/>
    <property type="molecule type" value="Genomic_DNA"/>
</dbReference>
<dbReference type="EMBL" id="FJ931118">
    <property type="protein sequence ID" value="ACZ98912.1"/>
    <property type="molecule type" value="mRNA"/>
</dbReference>
<dbReference type="EMBL" id="AC120498">
    <property type="status" value="NOT_ANNOTATED_CDS"/>
    <property type="molecule type" value="Genomic_DNA"/>
</dbReference>
<dbReference type="EMBL" id="BC074974">
    <property type="protein sequence ID" value="AAH74974.1"/>
    <property type="molecule type" value="mRNA"/>
</dbReference>
<dbReference type="CCDS" id="CCDS10431.1">
    <molecule id="Q15661-1"/>
</dbReference>
<dbReference type="PIR" id="A35863">
    <property type="entry name" value="A35863"/>
</dbReference>
<dbReference type="PIR" id="A45754">
    <property type="entry name" value="A45754"/>
</dbReference>
<dbReference type="PIR" id="C35863">
    <property type="entry name" value="C35863"/>
</dbReference>
<dbReference type="RefSeq" id="NP_003285.2">
    <molecule id="Q15661-1"/>
    <property type="nucleotide sequence ID" value="NM_003294.3"/>
</dbReference>
<dbReference type="PDB" id="1LTO">
    <property type="method" value="X-ray"/>
    <property type="resolution" value="2.20 A"/>
    <property type="chains" value="A/B/C/D=31-275"/>
</dbReference>
<dbReference type="PDB" id="2F9N">
    <property type="method" value="X-ray"/>
    <property type="resolution" value="1.60 A"/>
    <property type="chains" value="A/B/C/D=31-275"/>
</dbReference>
<dbReference type="PDB" id="2F9O">
    <property type="method" value="X-ray"/>
    <property type="resolution" value="2.10 A"/>
    <property type="chains" value="A/B/C/D=31-275"/>
</dbReference>
<dbReference type="PDB" id="2F9P">
    <property type="method" value="X-ray"/>
    <property type="resolution" value="2.30 A"/>
    <property type="chains" value="A/B/C/D=31-275"/>
</dbReference>
<dbReference type="PDB" id="2ZEB">
    <property type="method" value="X-ray"/>
    <property type="resolution" value="2.50 A"/>
    <property type="chains" value="A/B/C/D=31-273"/>
</dbReference>
<dbReference type="PDB" id="2ZEC">
    <property type="method" value="X-ray"/>
    <property type="resolution" value="2.06 A"/>
    <property type="chains" value="A/B/C/D=31-273"/>
</dbReference>
<dbReference type="PDB" id="4A6L">
    <property type="method" value="X-ray"/>
    <property type="resolution" value="2.05 A"/>
    <property type="chains" value="A/B/C/D=31-275"/>
</dbReference>
<dbReference type="PDB" id="4MPU">
    <property type="method" value="X-ray"/>
    <property type="resolution" value="1.65 A"/>
    <property type="chains" value="A/B=31-275"/>
</dbReference>
<dbReference type="PDB" id="4MPV">
    <property type="method" value="X-ray"/>
    <property type="resolution" value="2.31 A"/>
    <property type="chains" value="A/B=31-275"/>
</dbReference>
<dbReference type="PDB" id="4MPW">
    <property type="method" value="X-ray"/>
    <property type="resolution" value="1.95 A"/>
    <property type="chains" value="A/B=31-275"/>
</dbReference>
<dbReference type="PDB" id="4MPX">
    <property type="method" value="X-ray"/>
    <property type="resolution" value="2.00 A"/>
    <property type="chains" value="A/B=31-275"/>
</dbReference>
<dbReference type="PDB" id="4MQA">
    <property type="method" value="X-ray"/>
    <property type="resolution" value="2.25 A"/>
    <property type="chains" value="A/B=31-275"/>
</dbReference>
<dbReference type="PDB" id="5F03">
    <property type="method" value="X-ray"/>
    <property type="resolution" value="1.94 A"/>
    <property type="chains" value="A/B=31-275"/>
</dbReference>
<dbReference type="PDB" id="5WI6">
    <property type="method" value="X-ray"/>
    <property type="resolution" value="2.72 A"/>
    <property type="chains" value="A/B/C/D=31-275"/>
</dbReference>
<dbReference type="PDB" id="6O1F">
    <property type="method" value="X-ray"/>
    <property type="resolution" value="2.15 A"/>
    <property type="chains" value="A=31-275"/>
</dbReference>
<dbReference type="PDB" id="6P0P">
    <property type="method" value="X-ray"/>
    <property type="resolution" value="2.55 A"/>
    <property type="chains" value="A/B=1-275"/>
</dbReference>
<dbReference type="PDB" id="6VVU">
    <property type="method" value="X-ray"/>
    <property type="resolution" value="3.00 A"/>
    <property type="chains" value="A/B/C/D=1-275"/>
</dbReference>
<dbReference type="PDB" id="8VGH">
    <property type="method" value="EM"/>
    <property type="resolution" value="2.90 A"/>
    <property type="chains" value="A/B/C/D=31-275"/>
</dbReference>
<dbReference type="PDB" id="8VGI">
    <property type="method" value="EM"/>
    <property type="resolution" value="2.70 A"/>
    <property type="chains" value="A/B/C/D=31-275"/>
</dbReference>
<dbReference type="PDB" id="8VGJ">
    <property type="method" value="EM"/>
    <property type="resolution" value="2.50 A"/>
    <property type="chains" value="A/B/C/D=31-275"/>
</dbReference>
<dbReference type="PDB" id="8VGK">
    <property type="method" value="EM"/>
    <property type="resolution" value="2.40 A"/>
    <property type="chains" value="A/B/C/D=31-275"/>
</dbReference>
<dbReference type="PDBsum" id="1LTO"/>
<dbReference type="PDBsum" id="2F9N"/>
<dbReference type="PDBsum" id="2F9O"/>
<dbReference type="PDBsum" id="2F9P"/>
<dbReference type="PDBsum" id="2ZEB"/>
<dbReference type="PDBsum" id="2ZEC"/>
<dbReference type="PDBsum" id="4A6L"/>
<dbReference type="PDBsum" id="4MPU"/>
<dbReference type="PDBsum" id="4MPV"/>
<dbReference type="PDBsum" id="4MPW"/>
<dbReference type="PDBsum" id="4MPX"/>
<dbReference type="PDBsum" id="4MQA"/>
<dbReference type="PDBsum" id="5F03"/>
<dbReference type="PDBsum" id="5WI6"/>
<dbReference type="PDBsum" id="6O1F"/>
<dbReference type="PDBsum" id="6P0P"/>
<dbReference type="PDBsum" id="6VVU"/>
<dbReference type="PDBsum" id="8VGH"/>
<dbReference type="PDBsum" id="8VGI"/>
<dbReference type="PDBsum" id="8VGJ"/>
<dbReference type="PDBsum" id="8VGK"/>
<dbReference type="EMDB" id="EMD-43200"/>
<dbReference type="EMDB" id="EMD-43201"/>
<dbReference type="EMDB" id="EMD-43202"/>
<dbReference type="EMDB" id="EMD-43203"/>
<dbReference type="SMR" id="Q15661"/>
<dbReference type="BioGRID" id="113029">
    <property type="interactions" value="15"/>
</dbReference>
<dbReference type="ComplexPortal" id="CPX-3785">
    <property type="entry name" value="Tryptase alpha/beta-1 complex"/>
</dbReference>
<dbReference type="CORUM" id="Q15661"/>
<dbReference type="FunCoup" id="Q15661">
    <property type="interactions" value="85"/>
</dbReference>
<dbReference type="IntAct" id="Q15661">
    <property type="interactions" value="4"/>
</dbReference>
<dbReference type="MINT" id="Q15661"/>
<dbReference type="STRING" id="9606.ENSP00000343577"/>
<dbReference type="ChEMBL" id="CHEMBL2617"/>
<dbReference type="DrugBank" id="DB06848">
    <property type="generic name" value="1-(1'-{[3-(methylsulfanyl)-2-benzothiophen-1-yl]carbonyl}spiro[1-benzofuran-3,4'-piperidin]-5-yl)methanamine"/>
</dbReference>
<dbReference type="DrugBank" id="DB06849">
    <property type="generic name" value="1-[1'-(3-phenylacryloyl)spiro[1-benzofuran-3,4'-piperidin]-5-yl]methanamine"/>
</dbReference>
<dbReference type="DrugBank" id="DB16555">
    <property type="generic name" value="Lactoferrin"/>
</dbReference>
<dbReference type="DrugBank" id="DB00738">
    <property type="generic name" value="Pentamidine"/>
</dbReference>
<dbReference type="DrugCentral" id="Q15661"/>
<dbReference type="GuidetoPHARMACOLOGY" id="2424"/>
<dbReference type="MEROPS" id="S01.015"/>
<dbReference type="MEROPS" id="S01.143"/>
<dbReference type="GlyConnect" id="1861">
    <property type="glycosylation" value="12 N-Linked glycans (2 sites)"/>
</dbReference>
<dbReference type="GlyCosmos" id="Q15661">
    <property type="glycosylation" value="2 sites, 11 glycans"/>
</dbReference>
<dbReference type="GlyGen" id="Q15661">
    <property type="glycosylation" value="2 sites, 11 N-linked glycans (2 sites)"/>
</dbReference>
<dbReference type="iPTMnet" id="Q15661"/>
<dbReference type="PhosphoSitePlus" id="Q15661"/>
<dbReference type="BioMuta" id="TPSAB1"/>
<dbReference type="DMDM" id="18202508"/>
<dbReference type="jPOST" id="Q15661"/>
<dbReference type="MassIVE" id="Q15661"/>
<dbReference type="PaxDb" id="9606-ENSP00000343577"/>
<dbReference type="PeptideAtlas" id="Q15661"/>
<dbReference type="Antibodypedia" id="9463">
    <property type="antibodies" value="501 antibodies from 39 providers"/>
</dbReference>
<dbReference type="DNASU" id="7177"/>
<dbReference type="Ensembl" id="ENST00000338844.8">
    <molecule id="Q15661-1"/>
    <property type="protein sequence ID" value="ENSP00000343577.3"/>
    <property type="gene ID" value="ENSG00000172236.19"/>
</dbReference>
<dbReference type="Ensembl" id="ENST00000561736.3">
    <molecule id="Q15661-2"/>
    <property type="protein sequence ID" value="ENSP00000456821.2"/>
    <property type="gene ID" value="ENSG00000172236.19"/>
</dbReference>
<dbReference type="Ensembl" id="ENST00000677899.1">
    <molecule id="Q15661-1"/>
    <property type="protein sequence ID" value="ENSP00000502948.1"/>
    <property type="gene ID" value="ENSG00000172236.19"/>
</dbReference>
<dbReference type="Ensembl" id="ENST00000711396.1">
    <molecule id="Q15661-1"/>
    <property type="protein sequence ID" value="ENSP00000518727.1"/>
    <property type="gene ID" value="ENSG00000172236.19"/>
</dbReference>
<dbReference type="GeneID" id="7177"/>
<dbReference type="KEGG" id="hsa:7177"/>
<dbReference type="MANE-Select" id="ENST00000338844.8">
    <property type="protein sequence ID" value="ENSP00000343577.3"/>
    <property type="RefSeq nucleotide sequence ID" value="NM_003294.4"/>
    <property type="RefSeq protein sequence ID" value="NP_003285.2"/>
</dbReference>
<dbReference type="UCSC" id="uc002ckz.4">
    <molecule id="Q15661-1"/>
    <property type="organism name" value="human"/>
</dbReference>
<dbReference type="AGR" id="HGNC:12019"/>
<dbReference type="CTD" id="7177"/>
<dbReference type="DisGeNET" id="7177"/>
<dbReference type="GeneCards" id="TPSAB1"/>
<dbReference type="HGNC" id="HGNC:12019">
    <property type="gene designation" value="TPSAB1"/>
</dbReference>
<dbReference type="HPA" id="ENSG00000172236">
    <property type="expression patterns" value="Low tissue specificity"/>
</dbReference>
<dbReference type="MalaCards" id="TPSAB1"/>
<dbReference type="MIM" id="191080">
    <property type="type" value="gene"/>
</dbReference>
<dbReference type="neXtProt" id="NX_Q15661"/>
<dbReference type="OpenTargets" id="ENSG00000172236"/>
<dbReference type="PharmGKB" id="PA36698"/>
<dbReference type="VEuPathDB" id="HostDB:ENSG00000172236"/>
<dbReference type="eggNOG" id="KOG3627">
    <property type="taxonomic scope" value="Eukaryota"/>
</dbReference>
<dbReference type="GeneTree" id="ENSGT00940000164974"/>
<dbReference type="InParanoid" id="Q15661"/>
<dbReference type="OMA" id="NQLCDAE"/>
<dbReference type="OrthoDB" id="10002959at2759"/>
<dbReference type="PAN-GO" id="Q15661">
    <property type="GO annotations" value="3 GO annotations based on evolutionary models"/>
</dbReference>
<dbReference type="PhylomeDB" id="Q15661"/>
<dbReference type="TreeFam" id="TF351676"/>
<dbReference type="BRENDA" id="3.4.21.59">
    <property type="organism ID" value="2681"/>
</dbReference>
<dbReference type="PathwayCommons" id="Q15661"/>
<dbReference type="Reactome" id="R-HSA-1592389">
    <property type="pathway name" value="Activation of Matrix Metalloproteinases"/>
</dbReference>
<dbReference type="SignaLink" id="Q15661"/>
<dbReference type="SIGNOR" id="Q15661"/>
<dbReference type="BioGRID-ORCS" id="7177">
    <property type="hits" value="17 hits in 1103 CRISPR screens"/>
</dbReference>
<dbReference type="EvolutionaryTrace" id="Q15661"/>
<dbReference type="GenomeRNAi" id="7177"/>
<dbReference type="Pharos" id="Q15661">
    <property type="development level" value="Tclin"/>
</dbReference>
<dbReference type="PRO" id="PR:Q15661"/>
<dbReference type="Proteomes" id="UP000005640">
    <property type="component" value="Chromosome 16"/>
</dbReference>
<dbReference type="RNAct" id="Q15661">
    <property type="molecule type" value="protein"/>
</dbReference>
<dbReference type="Bgee" id="ENSG00000172236">
    <property type="expression patterns" value="Expressed in gall bladder and 88 other cell types or tissues"/>
</dbReference>
<dbReference type="ExpressionAtlas" id="Q15661">
    <property type="expression patterns" value="baseline and differential"/>
</dbReference>
<dbReference type="GO" id="GO:0005576">
    <property type="term" value="C:extracellular region"/>
    <property type="evidence" value="ECO:0007005"/>
    <property type="project" value="BHF-UCL"/>
</dbReference>
<dbReference type="GO" id="GO:0005615">
    <property type="term" value="C:extracellular space"/>
    <property type="evidence" value="ECO:0007005"/>
    <property type="project" value="BHF-UCL"/>
</dbReference>
<dbReference type="GO" id="GO:0042802">
    <property type="term" value="F:identical protein binding"/>
    <property type="evidence" value="ECO:0000353"/>
    <property type="project" value="IntAct"/>
</dbReference>
<dbReference type="GO" id="GO:0004252">
    <property type="term" value="F:serine-type endopeptidase activity"/>
    <property type="evidence" value="ECO:0000318"/>
    <property type="project" value="GO_Central"/>
</dbReference>
<dbReference type="GO" id="GO:0008236">
    <property type="term" value="F:serine-type peptidase activity"/>
    <property type="evidence" value="ECO:0000304"/>
    <property type="project" value="ProtInc"/>
</dbReference>
<dbReference type="GO" id="GO:0006952">
    <property type="term" value="P:defense response"/>
    <property type="evidence" value="ECO:0000304"/>
    <property type="project" value="ProtInc"/>
</dbReference>
<dbReference type="GO" id="GO:0022617">
    <property type="term" value="P:extracellular matrix disassembly"/>
    <property type="evidence" value="ECO:0000314"/>
    <property type="project" value="BHF-UCL"/>
</dbReference>
<dbReference type="GO" id="GO:0006508">
    <property type="term" value="P:proteolysis"/>
    <property type="evidence" value="ECO:0000318"/>
    <property type="project" value="GO_Central"/>
</dbReference>
<dbReference type="CDD" id="cd00190">
    <property type="entry name" value="Tryp_SPc"/>
    <property type="match status" value="1"/>
</dbReference>
<dbReference type="FunFam" id="2.40.10.10:FF:000039">
    <property type="entry name" value="Brain-specific serine protease 4"/>
    <property type="match status" value="1"/>
</dbReference>
<dbReference type="Gene3D" id="2.40.10.10">
    <property type="entry name" value="Trypsin-like serine proteases"/>
    <property type="match status" value="2"/>
</dbReference>
<dbReference type="InterPro" id="IPR009003">
    <property type="entry name" value="Peptidase_S1_PA"/>
</dbReference>
<dbReference type="InterPro" id="IPR043504">
    <property type="entry name" value="Peptidase_S1_PA_chymotrypsin"/>
</dbReference>
<dbReference type="InterPro" id="IPR001314">
    <property type="entry name" value="Peptidase_S1A"/>
</dbReference>
<dbReference type="InterPro" id="IPR001254">
    <property type="entry name" value="Trypsin_dom"/>
</dbReference>
<dbReference type="InterPro" id="IPR018114">
    <property type="entry name" value="TRYPSIN_HIS"/>
</dbReference>
<dbReference type="InterPro" id="IPR033116">
    <property type="entry name" value="TRYPSIN_SER"/>
</dbReference>
<dbReference type="PANTHER" id="PTHR24253:SF144">
    <property type="entry name" value="CHYMOTRYPSIN-LIKE PROTEASE CTRL-1-RELATED"/>
    <property type="match status" value="1"/>
</dbReference>
<dbReference type="PANTHER" id="PTHR24253">
    <property type="entry name" value="TRANSMEMBRANE PROTEASE SERINE"/>
    <property type="match status" value="1"/>
</dbReference>
<dbReference type="Pfam" id="PF00089">
    <property type="entry name" value="Trypsin"/>
    <property type="match status" value="1"/>
</dbReference>
<dbReference type="PRINTS" id="PR00722">
    <property type="entry name" value="CHYMOTRYPSIN"/>
</dbReference>
<dbReference type="SMART" id="SM00020">
    <property type="entry name" value="Tryp_SPc"/>
    <property type="match status" value="1"/>
</dbReference>
<dbReference type="SUPFAM" id="SSF50494">
    <property type="entry name" value="Trypsin-like serine proteases"/>
    <property type="match status" value="1"/>
</dbReference>
<dbReference type="PROSITE" id="PS50240">
    <property type="entry name" value="TRYPSIN_DOM"/>
    <property type="match status" value="1"/>
</dbReference>
<dbReference type="PROSITE" id="PS00134">
    <property type="entry name" value="TRYPSIN_HIS"/>
    <property type="match status" value="1"/>
</dbReference>
<dbReference type="PROSITE" id="PS00135">
    <property type="entry name" value="TRYPSIN_SER"/>
    <property type="match status" value="1"/>
</dbReference>
<protein>
    <recommendedName>
        <fullName>Tryptase alpha/beta-1</fullName>
        <shortName>Tryptase-1</shortName>
        <ecNumber>3.4.21.59</ecNumber>
    </recommendedName>
    <alternativeName>
        <fullName>Tryptase I</fullName>
    </alternativeName>
    <alternativeName>
        <fullName>Tryptase alpha-1</fullName>
    </alternativeName>
</protein>
<gene>
    <name type="primary">TPSAB1</name>
    <name type="synonym">TPS1</name>
    <name type="synonym">TPS2</name>
    <name type="synonym">TPSB1</name>
</gene>
<accession>Q15661</accession>
<accession>D2E6R9</accession>
<accession>D2E6S1</accession>
<accession>P15157</accession>
<accession>Q15663</accession>
<accession>Q6B052</accession>
<accession>Q9H2Y4</accession>
<accession>Q9H2Y5</accession>
<accession>Q9UQI1</accession>
<reference key="1">
    <citation type="journal article" date="1989" name="J. Clin. Invest.">
        <title>Cloning and characterization of complementary DNA for human tryptase.</title>
        <authorList>
            <person name="Miller J.S."/>
            <person name="Westin E.H."/>
            <person name="Schwartz L.B."/>
        </authorList>
    </citation>
    <scope>NUCLEOTIDE SEQUENCE [MRNA] (ISOFORM 1)</scope>
    <scope>VARIANTS THR-85; SER-215; GLN-216 AND LYS-221</scope>
    <source>
        <tissue>Lung</tissue>
    </source>
</reference>
<reference key="2">
    <citation type="submission" date="1990-03" db="EMBL/GenBank/DDBJ databases">
        <authorList>
            <person name="Schwartz L.B."/>
        </authorList>
    </citation>
    <scope>SEQUENCE REVISION TO 89-93 AND 108</scope>
</reference>
<reference key="3">
    <citation type="journal article" date="1990" name="Proc. Natl. Acad. Sci. U.S.A.">
        <title>Human mast cell tryptase: multiple cDNAs and genes reveal a multigene serine protease family.</title>
        <authorList>
            <person name="Vanderslice P."/>
            <person name="Ballinger S.M."/>
            <person name="Tam E.K."/>
            <person name="Goldstein S.M."/>
            <person name="Craik C.S."/>
            <person name="Caughey G.H."/>
        </authorList>
    </citation>
    <scope>NUCLEOTIDE SEQUENCE [GENOMIC DNA / MRNA] (ALLELE BETA-I) (ISOFORM 1)</scope>
</reference>
<reference key="4">
    <citation type="journal article" date="1999" name="J. Biol. Chem.">
        <title>Characterization of genes encoding known and novel human mast cell tryptases on chromosome 16p13.3.</title>
        <authorList>
            <person name="Pallaoro M."/>
            <person name="Fejzo M.S."/>
            <person name="Shayesteh L."/>
            <person name="Blount J.L."/>
            <person name="Caughey G.H."/>
        </authorList>
    </citation>
    <scope>NUCLEOTIDE SEQUENCE [GENOMIC DNA] (ALLELES ALPHA AND BETA-I) (ISOFORM 1)</scope>
</reference>
<reference key="5">
    <citation type="journal article" date="2008" name="J. Biol. Chem.">
        <title>Alternate mRNA splicing in multiple human tryptase genes is predicted to regulate tetramer formation.</title>
        <authorList>
            <person name="Jackson N.E."/>
            <person name="Wang H.W."/>
            <person name="Bryant K.J."/>
            <person name="McNeil H.P."/>
            <person name="Husain A."/>
            <person name="Liu K."/>
            <person name="Tedla N."/>
            <person name="Thomas P.S."/>
            <person name="King G.C."/>
            <person name="Hettiaratchi A."/>
            <person name="Cairns J."/>
            <person name="Hunt J.E."/>
        </authorList>
    </citation>
    <scope>NUCLEOTIDE SEQUENCE [MRNA] (ISOFORM 1)</scope>
    <scope>NUCLEOTIDE SEQUENCE [MRNA] OF 16-275 (ALLELE ALPHA; ISOFORM 2)</scope>
    <scope>NUCLEOTIDE SEQUENCE [MRNA] OF 54-275 (ALLELE BETA-I; ISOFORM 2)</scope>
    <scope>VARIANTS PRO-15 AND THR-85</scope>
    <scope>FUNCTION</scope>
    <scope>FIBRONECTIN CLEAVAGE</scope>
    <scope>TISSUE SPECIFICITY</scope>
</reference>
<reference key="6">
    <citation type="journal article" date="2009" name="J. Allergy Clin. Immunol.">
        <title>Human subjects are protected from mast cell tryptase deficiency despite frequent inheritance of loss-of-function mutations.</title>
        <authorList>
            <person name="Trivedi N.N."/>
            <person name="Tamraz B."/>
            <person name="Chu C."/>
            <person name="Kwok P.Y."/>
            <person name="Caughey G.H."/>
        </authorList>
    </citation>
    <scope>NUCLEOTIDE SEQUENCE [GENOMIC DNA] (ISOFORM 1)</scope>
    <scope>VARIANTS PRO-15; SER-170; SER-215; GLN-216 AND LYS-221</scope>
</reference>
<reference key="7">
    <citation type="journal article" date="2004" name="Nature">
        <title>The sequence and analysis of duplication-rich human chromosome 16.</title>
        <authorList>
            <person name="Martin J."/>
            <person name="Han C."/>
            <person name="Gordon L.A."/>
            <person name="Terry A."/>
            <person name="Prabhakar S."/>
            <person name="She X."/>
            <person name="Xie G."/>
            <person name="Hellsten U."/>
            <person name="Chan Y.M."/>
            <person name="Altherr M."/>
            <person name="Couronne O."/>
            <person name="Aerts A."/>
            <person name="Bajorek E."/>
            <person name="Black S."/>
            <person name="Blumer H."/>
            <person name="Branscomb E."/>
            <person name="Brown N.C."/>
            <person name="Bruno W.J."/>
            <person name="Buckingham J.M."/>
            <person name="Callen D.F."/>
            <person name="Campbell C.S."/>
            <person name="Campbell M.L."/>
            <person name="Campbell E.W."/>
            <person name="Caoile C."/>
            <person name="Challacombe J.F."/>
            <person name="Chasteen L.A."/>
            <person name="Chertkov O."/>
            <person name="Chi H.C."/>
            <person name="Christensen M."/>
            <person name="Clark L.M."/>
            <person name="Cohn J.D."/>
            <person name="Denys M."/>
            <person name="Detter J.C."/>
            <person name="Dickson M."/>
            <person name="Dimitrijevic-Bussod M."/>
            <person name="Escobar J."/>
            <person name="Fawcett J.J."/>
            <person name="Flowers D."/>
            <person name="Fotopulos D."/>
            <person name="Glavina T."/>
            <person name="Gomez M."/>
            <person name="Gonzales E."/>
            <person name="Goodstein D."/>
            <person name="Goodwin L.A."/>
            <person name="Grady D.L."/>
            <person name="Grigoriev I."/>
            <person name="Groza M."/>
            <person name="Hammon N."/>
            <person name="Hawkins T."/>
            <person name="Haydu L."/>
            <person name="Hildebrand C.E."/>
            <person name="Huang W."/>
            <person name="Israni S."/>
            <person name="Jett J."/>
            <person name="Jewett P.B."/>
            <person name="Kadner K."/>
            <person name="Kimball H."/>
            <person name="Kobayashi A."/>
            <person name="Krawczyk M.-C."/>
            <person name="Leyba T."/>
            <person name="Longmire J.L."/>
            <person name="Lopez F."/>
            <person name="Lou Y."/>
            <person name="Lowry S."/>
            <person name="Ludeman T."/>
            <person name="Manohar C.F."/>
            <person name="Mark G.A."/>
            <person name="McMurray K.L."/>
            <person name="Meincke L.J."/>
            <person name="Morgan J."/>
            <person name="Moyzis R.K."/>
            <person name="Mundt M.O."/>
            <person name="Munk A.C."/>
            <person name="Nandkeshwar R.D."/>
            <person name="Pitluck S."/>
            <person name="Pollard M."/>
            <person name="Predki P."/>
            <person name="Parson-Quintana B."/>
            <person name="Ramirez L."/>
            <person name="Rash S."/>
            <person name="Retterer J."/>
            <person name="Ricke D.O."/>
            <person name="Robinson D.L."/>
            <person name="Rodriguez A."/>
            <person name="Salamov A."/>
            <person name="Saunders E.H."/>
            <person name="Scott D."/>
            <person name="Shough T."/>
            <person name="Stallings R.L."/>
            <person name="Stalvey M."/>
            <person name="Sutherland R.D."/>
            <person name="Tapia R."/>
            <person name="Tesmer J.G."/>
            <person name="Thayer N."/>
            <person name="Thompson L.S."/>
            <person name="Tice H."/>
            <person name="Torney D.C."/>
            <person name="Tran-Gyamfi M."/>
            <person name="Tsai M."/>
            <person name="Ulanovsky L.E."/>
            <person name="Ustaszewska A."/>
            <person name="Vo N."/>
            <person name="White P.S."/>
            <person name="Williams A.L."/>
            <person name="Wills P.L."/>
            <person name="Wu J.-R."/>
            <person name="Wu K."/>
            <person name="Yang J."/>
            <person name="DeJong P."/>
            <person name="Bruce D."/>
            <person name="Doggett N.A."/>
            <person name="Deaven L."/>
            <person name="Schmutz J."/>
            <person name="Grimwood J."/>
            <person name="Richardson P."/>
            <person name="Rokhsar D.S."/>
            <person name="Eichler E.E."/>
            <person name="Gilna P."/>
            <person name="Lucas S.M."/>
            <person name="Myers R.M."/>
            <person name="Rubin E.M."/>
            <person name="Pennacchio L.A."/>
        </authorList>
    </citation>
    <scope>NUCLEOTIDE SEQUENCE [LARGE SCALE GENOMIC DNA]</scope>
</reference>
<reference key="8">
    <citation type="journal article" date="2004" name="Genome Res.">
        <title>The status, quality, and expansion of the NIH full-length cDNA project: the Mammalian Gene Collection (MGC).</title>
        <authorList>
            <consortium name="The MGC Project Team"/>
        </authorList>
    </citation>
    <scope>NUCLEOTIDE SEQUENCE [LARGE SCALE MRNA] (ISOFORM 1)</scope>
    <scope>VARIANT LYS-132</scope>
</reference>
<reference key="9">
    <citation type="journal article" date="1987" name="J. Biol. Chem.">
        <title>Human pituitary tryptase: molecular forms, NH2-terminal sequence, immunocytochemical localization, and specificity with prohormone and fluorogenic substrates.</title>
        <authorList>
            <person name="Cromlish J.A."/>
            <person name="Seidah N.G."/>
            <person name="Marcinkiewcz M."/>
            <person name="Hamelin J."/>
            <person name="Johnson D.A."/>
            <person name="Chretein M."/>
        </authorList>
    </citation>
    <scope>PROTEIN SEQUENCE OF 31-50</scope>
    <scope>PROTEIN SEQUENCE OF 31-38</scope>
    <source>
        <tissue>Lung</tissue>
    </source>
</reference>
<reference key="10">
    <citation type="journal article" date="2004" name="Blood">
        <title>Intracellular serpin SERPINB6 (PI6) is abundantly expressed by human mast cells and forms complexes with beta-tryptase monomers.</title>
        <authorList>
            <person name="Strik M.C."/>
            <person name="Wolbink A."/>
            <person name="Wouters D."/>
            <person name="Bladergroen B.A."/>
            <person name="Verlaan A.R."/>
            <person name="van Houdt I.S."/>
            <person name="Hijlkema S."/>
            <person name="Hack C.E."/>
            <person name="Kummer J.A."/>
        </authorList>
    </citation>
    <scope>FORMATION OF A COMPLEX WITH SERPINB6</scope>
</reference>
<reference key="11">
    <citation type="journal article" date="2007" name="Int. Immunopharmacol.">
        <title>Active monomers of human beta-tryptase have expanded substrate specificities.</title>
        <authorList>
            <person name="Fukuoka Y."/>
            <person name="Schwartz L.B."/>
        </authorList>
    </citation>
    <scope>SUBUNIT</scope>
</reference>
<reference key="12">
    <citation type="journal article" date="2009" name="J. Proteome Res.">
        <title>Glycoproteomics analysis of human liver tissue by combination of multiple enzyme digestion and hydrazide chemistry.</title>
        <authorList>
            <person name="Chen R."/>
            <person name="Jiang X."/>
            <person name="Sun D."/>
            <person name="Han G."/>
            <person name="Wang F."/>
            <person name="Ye M."/>
            <person name="Wang L."/>
            <person name="Zou H."/>
        </authorList>
    </citation>
    <scope>GLYCOSYLATION [LARGE SCALE ANALYSIS] AT ASN-233</scope>
    <source>
        <tissue>Liver</tissue>
    </source>
</reference>
<reference key="13">
    <citation type="journal article" date="2015" name="Proteomics">
        <title>N-terminome analysis of the human mitochondrial proteome.</title>
        <authorList>
            <person name="Vaca Jacome A.S."/>
            <person name="Rabilloud T."/>
            <person name="Schaeffer-Reiss C."/>
            <person name="Rompais M."/>
            <person name="Ayoub D."/>
            <person name="Lane L."/>
            <person name="Bairoch A."/>
            <person name="Van Dorsselaer A."/>
            <person name="Carapito C."/>
        </authorList>
    </citation>
    <scope>IDENTIFICATION BY MASS SPECTROMETRY [LARGE SCALE ANALYSIS]</scope>
</reference>
<reference key="14">
    <citation type="journal article" date="2016" name="Nat. Genet.">
        <title>Elevated basal serum tryptase identifies a multisystem disorder associated with increased TPSAB1 copy number.</title>
        <authorList>
            <person name="Lyons J.J."/>
            <person name="Yu X."/>
            <person name="Hughes J.D."/>
            <person name="Le Q.T."/>
            <person name="Jamil A."/>
            <person name="Bai Y."/>
            <person name="Ho N."/>
            <person name="Zhao M."/>
            <person name="Liu Y."/>
            <person name="O'Connell M.P."/>
            <person name="Trivedi N.N."/>
            <person name="Nelson C."/>
            <person name="DiMaggio T."/>
            <person name="Jones N."/>
            <person name="Matthews H."/>
            <person name="Lewis K.L."/>
            <person name="Oler A.J."/>
            <person name="Carlson R.J."/>
            <person name="Arkwright P.D."/>
            <person name="Hong C."/>
            <person name="Agama S."/>
            <person name="Wilson T.M."/>
            <person name="Tucker S."/>
            <person name="Zhang Y."/>
            <person name="McElwee J.J."/>
            <person name="Pao M."/>
            <person name="Glover S.C."/>
            <person name="Rothenberg M.E."/>
            <person name="Hohman R.J."/>
            <person name="Stone K.D."/>
            <person name="Caughey G.H."/>
            <person name="Heller T."/>
            <person name="Metcalfe D.D."/>
            <person name="Biesecker L.G."/>
            <person name="Schwartz L.B."/>
            <person name="Milner J.D."/>
        </authorList>
    </citation>
    <scope>INVOLVEMENT IN HEREDITARY ALPHA TRYPTASEMIA</scope>
</reference>
<reference key="15">
    <citation type="journal article" date="2002" name="J. Mol. Biol.">
        <title>The crystal structure of human alpha1-tryptase reveals a blocked substrate-binding region.</title>
        <authorList>
            <person name="Marquardt U."/>
            <person name="Zettl F."/>
            <person name="Huber R."/>
            <person name="Bode W."/>
            <person name="Sommerhoff C."/>
        </authorList>
    </citation>
    <scope>X-RAY CRYSTALLOGRAPHY (2.2 ANGSTROMS) OF 31-275</scope>
</reference>
<reference key="16">
    <citation type="journal article" date="2000" name="Pharmacogenetics">
        <title>Characterization of two highly polymorphic human tryptase loci and comparison with a newly discovered monkey tryptase ortholog.</title>
        <authorList>
            <person name="Guida M."/>
            <person name="Riedy M."/>
            <person name="Lee D."/>
            <person name="Hall J."/>
        </authorList>
    </citation>
    <scope>VARIANTS PRO-15; VAL-18; VAL-23; THR-85; LYS-132; ALA-141; ASN-162; SER-170; SER-215; GLN-216; LYS-221 AND ASN-263</scope>
</reference>
<feature type="signal peptide" evidence="3">
    <location>
        <begin position="1"/>
        <end position="18"/>
    </location>
</feature>
<feature type="propeptide" id="PRO_0000027479" description="Activation peptide" evidence="1">
    <location>
        <begin position="19"/>
        <end position="30"/>
    </location>
</feature>
<feature type="chain" id="PRO_0000027480" description="Tryptase alpha/beta-1">
    <location>
        <begin position="31"/>
        <end position="275"/>
    </location>
</feature>
<feature type="domain" description="Peptidase S1" evidence="4">
    <location>
        <begin position="31"/>
        <end position="272"/>
    </location>
</feature>
<feature type="active site" description="Charge relay system">
    <location>
        <position position="74"/>
    </location>
</feature>
<feature type="active site" description="Charge relay system">
    <location>
        <position position="121"/>
    </location>
</feature>
<feature type="active site" description="Charge relay system">
    <location>
        <position position="224"/>
    </location>
</feature>
<feature type="glycosylation site" description="N-linked (GlcNAc...) asparagine" evidence="3">
    <location>
        <position position="132"/>
    </location>
</feature>
<feature type="glycosylation site" description="N-linked (GlcNAc...) asparagine" evidence="9">
    <location>
        <position position="233"/>
    </location>
</feature>
<feature type="disulfide bond">
    <location>
        <begin position="59"/>
        <end position="75"/>
    </location>
</feature>
<feature type="disulfide bond">
    <location>
        <begin position="155"/>
        <end position="230"/>
    </location>
</feature>
<feature type="disulfide bond">
    <location>
        <begin position="188"/>
        <end position="211"/>
    </location>
</feature>
<feature type="disulfide bond">
    <location>
        <begin position="220"/>
        <end position="248"/>
    </location>
</feature>
<feature type="splice variant" id="VSP_005375" description="In isoform 2." evidence="15">
    <location>
        <begin position="79"/>
        <end position="87"/>
    </location>
</feature>
<feature type="sequence variant" id="VAR_064277" description="In allele alpha; dbSNP:rs371929937.">
    <original>N</original>
    <variation>S</variation>
    <location>
        <position position="3"/>
    </location>
</feature>
<feature type="sequence variant" id="VAR_064278" description="In dbSNP:rs761476435." evidence="5 8 10">
    <original>R</original>
    <variation>P</variation>
    <location>
        <position position="15"/>
    </location>
</feature>
<feature type="sequence variant" id="VAR_014557" description="In dbSNP:rs562518617." evidence="5">
    <original>A</original>
    <variation>V</variation>
    <location>
        <position position="18"/>
    </location>
</feature>
<feature type="sequence variant" id="VAR_014558" description="In allele alpha; dbSNP:rs141519544." evidence="5">
    <original>G</original>
    <variation>V</variation>
    <location>
        <position position="23"/>
    </location>
</feature>
<feature type="sequence variant" id="VAR_064279" description="In allele alpha; dbSNP:rs146223687.">
    <original>R</original>
    <variation>Q</variation>
    <location>
        <position position="28"/>
    </location>
</feature>
<feature type="sequence variant" id="VAR_064280" description="In allele alpha; dbSNP:rs112944038.">
    <original>V</original>
    <variation>A</variation>
    <location>
        <position position="29"/>
    </location>
</feature>
<feature type="sequence variant" id="VAR_064281" description="In allele alpha; dbSNP:rs1060281.">
    <original>H</original>
    <variation>R</variation>
    <location>
        <position position="51"/>
    </location>
</feature>
<feature type="sequence variant" id="VAR_064282" description="In allele alpha; dbSNP:rs17841227.">
    <original>G</original>
    <variation>D</variation>
    <location>
        <position position="52"/>
    </location>
</feature>
<feature type="sequence variant" id="VAR_064283" description="In allele alpha; dbSNP:rs17841226.">
    <original>P</original>
    <variation>R</variation>
    <location>
        <position position="53"/>
    </location>
</feature>
<feature type="sequence variant" id="VAR_064284" description="In allele alpha; dbSNP:rs151324823.">
    <original>V</original>
    <variation>L</variation>
    <location>
        <position position="76"/>
    </location>
</feature>
<feature type="sequence variant" id="VAR_014559" description="In dbSNP:rs201351744." evidence="5 8 12">
    <original>A</original>
    <variation>T</variation>
    <location>
        <position position="85"/>
    </location>
</feature>
<feature type="sequence variant" id="VAR_064285" description="In allele alpha; dbSNP:rs199625169.">
    <original>T</original>
    <variation>I</variation>
    <location>
        <position position="115"/>
    </location>
</feature>
<feature type="sequence variant" id="VAR_064286" description="In allele alpha; requires 2 nucleotide substitutions.">
    <original>A</original>
    <variation>I</variation>
    <location>
        <position position="116"/>
    </location>
</feature>
<feature type="sequence variant" id="VAR_064287" description="In allele alpha; dbSNP:rs202044288.">
    <original>I</original>
    <variation>T</variation>
    <location>
        <position position="118"/>
    </location>
</feature>
<feature type="sequence variant" id="VAR_016102" description="In dbSNP:rs144979264." evidence="5 6">
    <original>N</original>
    <variation>K</variation>
    <location>
        <position position="132"/>
    </location>
</feature>
<feature type="sequence variant" id="VAR_064288" description="In allele alpha; dbSNP:rs200334042.">
    <original>V</original>
    <variation>I</variation>
    <location>
        <position position="133"/>
    </location>
</feature>
<feature type="sequence variant" id="VAR_051830" description="In allele alpha; dbSNP:rs1064780.">
    <original>H</original>
    <variation>R</variation>
    <location>
        <position position="136"/>
    </location>
</feature>
<feature type="sequence variant" id="VAR_014560" description="In dbSNP:rs149113013." evidence="5">
    <original>T</original>
    <variation>A</variation>
    <location>
        <position position="141"/>
    </location>
</feature>
<feature type="sequence variant" id="VAR_064289" description="In allele alpha.">
    <original>T</original>
    <variation>M</variation>
    <location>
        <position position="141"/>
    </location>
</feature>
<feature type="sequence variant" id="VAR_014561" description="In dbSNP:rs143210825." evidence="5">
    <original>D</original>
    <variation>N</variation>
    <location>
        <position position="162"/>
    </location>
</feature>
<feature type="sequence variant" id="VAR_064290" description="In allele alpha; dbSNP:rs202156919.">
    <original>R</original>
    <variation>P</variation>
    <location>
        <position position="168"/>
    </location>
</feature>
<feature type="sequence variant" id="VAR_014562" description="In dbSNP:rs201345428." evidence="5 10">
    <original>P</original>
    <variation>S</variation>
    <location>
        <position position="170"/>
    </location>
</feature>
<feature type="sequence variant" id="VAR_064291" description="In allele alpha; dbSNP:rs1060284.">
    <original>V</original>
    <variation>I</variation>
    <location>
        <position position="205"/>
    </location>
</feature>
<feature type="sequence variant" id="VAR_014563" description="In dbSNP:rs2234905." evidence="5 10 12">
    <original>T</original>
    <variation>S</variation>
    <location>
        <position position="215"/>
    </location>
</feature>
<feature type="sequence variant" id="VAR_014564" description="In dbSNP:rs2234906." evidence="5 10 12">
    <original>R</original>
    <variation>Q</variation>
    <location>
        <position position="216"/>
    </location>
</feature>
<feature type="sequence variant" id="VAR_064292" description="In dbSNP:rs201192435." evidence="5 10 12">
    <original>Q</original>
    <variation>K</variation>
    <location>
        <position position="221"/>
    </location>
</feature>
<feature type="sequence variant" id="VAR_064293" description="In allele alpha; dbSNP:rs145402040.">
    <original>G</original>
    <variation>D</variation>
    <location>
        <position position="245"/>
    </location>
</feature>
<feature type="sequence variant" id="VAR_064294" description="In dbSNP:rs200355084." evidence="5">
    <original>Y</original>
    <variation>N</variation>
    <location>
        <position position="263"/>
    </location>
</feature>
<feature type="sequence conflict" description="In Ref. 6; ACZ98912." evidence="15" ref="6">
    <original>E</original>
    <variation>K</variation>
    <location>
        <position position="129"/>
    </location>
</feature>
<feature type="strand" evidence="20">
    <location>
        <begin position="32"/>
        <end position="36"/>
    </location>
</feature>
<feature type="turn" evidence="21">
    <location>
        <begin position="39"/>
        <end position="41"/>
    </location>
</feature>
<feature type="strand" evidence="16">
    <location>
        <begin position="45"/>
        <end position="65"/>
    </location>
</feature>
<feature type="strand" evidence="16">
    <location>
        <begin position="68"/>
        <end position="71"/>
    </location>
</feature>
<feature type="helix" evidence="16">
    <location>
        <begin position="73"/>
        <end position="76"/>
    </location>
</feature>
<feature type="helix" evidence="16">
    <location>
        <begin position="83"/>
        <end position="85"/>
    </location>
</feature>
<feature type="strand" evidence="16">
    <location>
        <begin position="86"/>
        <end position="89"/>
    </location>
</feature>
<feature type="turn" evidence="16">
    <location>
        <begin position="95"/>
        <end position="98"/>
    </location>
</feature>
<feature type="strand" evidence="16">
    <location>
        <begin position="104"/>
        <end position="109"/>
    </location>
</feature>
<feature type="turn" evidence="19">
    <location>
        <begin position="116"/>
        <end position="118"/>
    </location>
</feature>
<feature type="strand" evidence="16">
    <location>
        <begin position="123"/>
        <end position="129"/>
    </location>
</feature>
<feature type="strand" evidence="16">
    <location>
        <begin position="135"/>
        <end position="137"/>
    </location>
</feature>
<feature type="strand" evidence="16">
    <location>
        <begin position="155"/>
        <end position="160"/>
    </location>
</feature>
<feature type="strand" evidence="22">
    <location>
        <begin position="163"/>
        <end position="166"/>
    </location>
</feature>
<feature type="strand" evidence="16">
    <location>
        <begin position="176"/>
        <end position="179"/>
    </location>
</feature>
<feature type="helix" evidence="16">
    <location>
        <begin position="185"/>
        <end position="193"/>
    </location>
</feature>
<feature type="strand" evidence="17">
    <location>
        <begin position="196"/>
        <end position="198"/>
    </location>
</feature>
<feature type="strand" evidence="16">
    <location>
        <begin position="209"/>
        <end position="212"/>
    </location>
</feature>
<feature type="strand" evidence="16">
    <location>
        <begin position="215"/>
        <end position="218"/>
    </location>
</feature>
<feature type="turn" evidence="18">
    <location>
        <begin position="221"/>
        <end position="225"/>
    </location>
</feature>
<feature type="strand" evidence="16">
    <location>
        <begin position="227"/>
        <end position="232"/>
    </location>
</feature>
<feature type="strand" evidence="16">
    <location>
        <begin position="235"/>
        <end position="244"/>
    </location>
</feature>
<feature type="strand" evidence="16">
    <location>
        <begin position="246"/>
        <end position="250"/>
    </location>
</feature>
<feature type="strand" evidence="16">
    <location>
        <begin position="255"/>
        <end position="259"/>
    </location>
</feature>
<feature type="helix" evidence="16">
    <location>
        <begin position="260"/>
        <end position="263"/>
    </location>
</feature>
<feature type="helix" evidence="16">
    <location>
        <begin position="264"/>
        <end position="270"/>
    </location>
</feature>
<proteinExistence type="evidence at protein level"/>